<dbReference type="EMBL" id="AE008922">
    <property type="protein sequence ID" value="AAM39795.1"/>
    <property type="molecule type" value="Genomic_DNA"/>
</dbReference>
<dbReference type="RefSeq" id="NP_635871.1">
    <property type="nucleotide sequence ID" value="NC_003902.1"/>
</dbReference>
<dbReference type="RefSeq" id="WP_011035728.1">
    <property type="nucleotide sequence ID" value="NC_003902.1"/>
</dbReference>
<dbReference type="SMR" id="Q8PD66"/>
<dbReference type="STRING" id="190485.XCC0477"/>
<dbReference type="EnsemblBacteria" id="AAM39795">
    <property type="protein sequence ID" value="AAM39795"/>
    <property type="gene ID" value="XCC0477"/>
</dbReference>
<dbReference type="GeneID" id="58011789"/>
<dbReference type="KEGG" id="xcc:XCC0477"/>
<dbReference type="PATRIC" id="fig|190485.4.peg.524"/>
<dbReference type="eggNOG" id="COG0103">
    <property type="taxonomic scope" value="Bacteria"/>
</dbReference>
<dbReference type="HOGENOM" id="CLU_046483_2_1_6"/>
<dbReference type="OrthoDB" id="9803965at2"/>
<dbReference type="Proteomes" id="UP000001010">
    <property type="component" value="Chromosome"/>
</dbReference>
<dbReference type="GO" id="GO:0022627">
    <property type="term" value="C:cytosolic small ribosomal subunit"/>
    <property type="evidence" value="ECO:0000318"/>
    <property type="project" value="GO_Central"/>
</dbReference>
<dbReference type="GO" id="GO:0003723">
    <property type="term" value="F:RNA binding"/>
    <property type="evidence" value="ECO:0000318"/>
    <property type="project" value="GO_Central"/>
</dbReference>
<dbReference type="GO" id="GO:0003735">
    <property type="term" value="F:structural constituent of ribosome"/>
    <property type="evidence" value="ECO:0000318"/>
    <property type="project" value="GO_Central"/>
</dbReference>
<dbReference type="GO" id="GO:0006412">
    <property type="term" value="P:translation"/>
    <property type="evidence" value="ECO:0007669"/>
    <property type="project" value="UniProtKB-UniRule"/>
</dbReference>
<dbReference type="FunFam" id="3.30.230.10:FF:000001">
    <property type="entry name" value="30S ribosomal protein S9"/>
    <property type="match status" value="1"/>
</dbReference>
<dbReference type="Gene3D" id="3.30.230.10">
    <property type="match status" value="1"/>
</dbReference>
<dbReference type="HAMAP" id="MF_00532_B">
    <property type="entry name" value="Ribosomal_uS9_B"/>
    <property type="match status" value="1"/>
</dbReference>
<dbReference type="InterPro" id="IPR020568">
    <property type="entry name" value="Ribosomal_Su5_D2-typ_SF"/>
</dbReference>
<dbReference type="InterPro" id="IPR000754">
    <property type="entry name" value="Ribosomal_uS9"/>
</dbReference>
<dbReference type="InterPro" id="IPR023035">
    <property type="entry name" value="Ribosomal_uS9_bac/plastid"/>
</dbReference>
<dbReference type="InterPro" id="IPR020574">
    <property type="entry name" value="Ribosomal_uS9_CS"/>
</dbReference>
<dbReference type="InterPro" id="IPR014721">
    <property type="entry name" value="Ribsml_uS5_D2-typ_fold_subgr"/>
</dbReference>
<dbReference type="NCBIfam" id="NF001099">
    <property type="entry name" value="PRK00132.1"/>
    <property type="match status" value="1"/>
</dbReference>
<dbReference type="PANTHER" id="PTHR21569">
    <property type="entry name" value="RIBOSOMAL PROTEIN S9"/>
    <property type="match status" value="1"/>
</dbReference>
<dbReference type="PANTHER" id="PTHR21569:SF1">
    <property type="entry name" value="SMALL RIBOSOMAL SUBUNIT PROTEIN US9M"/>
    <property type="match status" value="1"/>
</dbReference>
<dbReference type="Pfam" id="PF00380">
    <property type="entry name" value="Ribosomal_S9"/>
    <property type="match status" value="1"/>
</dbReference>
<dbReference type="SUPFAM" id="SSF54211">
    <property type="entry name" value="Ribosomal protein S5 domain 2-like"/>
    <property type="match status" value="1"/>
</dbReference>
<dbReference type="PROSITE" id="PS00360">
    <property type="entry name" value="RIBOSOMAL_S9"/>
    <property type="match status" value="1"/>
</dbReference>
<protein>
    <recommendedName>
        <fullName evidence="1">Small ribosomal subunit protein uS9</fullName>
    </recommendedName>
    <alternativeName>
        <fullName evidence="2">30S ribosomal protein S9</fullName>
    </alternativeName>
</protein>
<comment type="similarity">
    <text evidence="1">Belongs to the universal ribosomal protein uS9 family.</text>
</comment>
<evidence type="ECO:0000255" key="1">
    <source>
        <dbReference type="HAMAP-Rule" id="MF_00532"/>
    </source>
</evidence>
<evidence type="ECO:0000305" key="2"/>
<reference key="1">
    <citation type="journal article" date="2002" name="Nature">
        <title>Comparison of the genomes of two Xanthomonas pathogens with differing host specificities.</title>
        <authorList>
            <person name="da Silva A.C.R."/>
            <person name="Ferro J.A."/>
            <person name="Reinach F.C."/>
            <person name="Farah C.S."/>
            <person name="Furlan L.R."/>
            <person name="Quaggio R.B."/>
            <person name="Monteiro-Vitorello C.B."/>
            <person name="Van Sluys M.A."/>
            <person name="Almeida N.F. Jr."/>
            <person name="Alves L.M.C."/>
            <person name="do Amaral A.M."/>
            <person name="Bertolini M.C."/>
            <person name="Camargo L.E.A."/>
            <person name="Camarotte G."/>
            <person name="Cannavan F."/>
            <person name="Cardozo J."/>
            <person name="Chambergo F."/>
            <person name="Ciapina L.P."/>
            <person name="Cicarelli R.M.B."/>
            <person name="Coutinho L.L."/>
            <person name="Cursino-Santos J.R."/>
            <person name="El-Dorry H."/>
            <person name="Faria J.B."/>
            <person name="Ferreira A.J.S."/>
            <person name="Ferreira R.C.C."/>
            <person name="Ferro M.I.T."/>
            <person name="Formighieri E.F."/>
            <person name="Franco M.C."/>
            <person name="Greggio C.C."/>
            <person name="Gruber A."/>
            <person name="Katsuyama A.M."/>
            <person name="Kishi L.T."/>
            <person name="Leite R.P."/>
            <person name="Lemos E.G.M."/>
            <person name="Lemos M.V.F."/>
            <person name="Locali E.C."/>
            <person name="Machado M.A."/>
            <person name="Madeira A.M.B.N."/>
            <person name="Martinez-Rossi N.M."/>
            <person name="Martins E.C."/>
            <person name="Meidanis J."/>
            <person name="Menck C.F.M."/>
            <person name="Miyaki C.Y."/>
            <person name="Moon D.H."/>
            <person name="Moreira L.M."/>
            <person name="Novo M.T.M."/>
            <person name="Okura V.K."/>
            <person name="Oliveira M.C."/>
            <person name="Oliveira V.R."/>
            <person name="Pereira H.A."/>
            <person name="Rossi A."/>
            <person name="Sena J.A.D."/>
            <person name="Silva C."/>
            <person name="de Souza R.F."/>
            <person name="Spinola L.A.F."/>
            <person name="Takita M.A."/>
            <person name="Tamura R.E."/>
            <person name="Teixeira E.C."/>
            <person name="Tezza R.I.D."/>
            <person name="Trindade dos Santos M."/>
            <person name="Truffi D."/>
            <person name="Tsai S.M."/>
            <person name="White F.F."/>
            <person name="Setubal J.C."/>
            <person name="Kitajima J.P."/>
        </authorList>
    </citation>
    <scope>NUCLEOTIDE SEQUENCE [LARGE SCALE GENOMIC DNA]</scope>
    <source>
        <strain>ATCC 33913 / DSM 3586 / NCPPB 528 / LMG 568 / P 25</strain>
    </source>
</reference>
<name>RS9_XANCP</name>
<proteinExistence type="inferred from homology"/>
<organism>
    <name type="scientific">Xanthomonas campestris pv. campestris (strain ATCC 33913 / DSM 3586 / NCPPB 528 / LMG 568 / P 25)</name>
    <dbReference type="NCBI Taxonomy" id="190485"/>
    <lineage>
        <taxon>Bacteria</taxon>
        <taxon>Pseudomonadati</taxon>
        <taxon>Pseudomonadota</taxon>
        <taxon>Gammaproteobacteria</taxon>
        <taxon>Lysobacterales</taxon>
        <taxon>Lysobacteraceae</taxon>
        <taxon>Xanthomonas</taxon>
    </lineage>
</organism>
<sequence>MAITQNYGTGRRKSSTARVFLRKGTGNITVNNRPLDEFFGRETARMIVRQPLELTKNTESFDILVTASGGGTTGQAGAIRLGIARALVEYDETLKSELRKAGFMTRDAREVERKKVGLHKARRATQFSKR</sequence>
<feature type="chain" id="PRO_0000111444" description="Small ribosomal subunit protein uS9">
    <location>
        <begin position="1"/>
        <end position="130"/>
    </location>
</feature>
<keyword id="KW-1185">Reference proteome</keyword>
<keyword id="KW-0687">Ribonucleoprotein</keyword>
<keyword id="KW-0689">Ribosomal protein</keyword>
<accession>Q8PD66</accession>
<gene>
    <name evidence="1" type="primary">rpsI</name>
    <name type="ordered locus">XCC0477</name>
</gene>